<sequence>MAKNLNSVSFIVLLLVLLVASTEILKSDAACFTFLGECGPEPFTGSNADCLACCVALYKSPPVCAGRVEGVPAHCHCYKS</sequence>
<proteinExistence type="evidence at transcript level"/>
<evidence type="ECO:0000250" key="1"/>
<evidence type="ECO:0000255" key="2"/>
<evidence type="ECO:0000305" key="3"/>
<gene>
    <name type="ordered locus">At5g33355</name>
    <name type="ORF">F19N2</name>
</gene>
<protein>
    <recommendedName>
        <fullName>Defensin-like protein 207</fullName>
    </recommendedName>
</protein>
<accession>Q3E8R5</accession>
<comment type="subcellular location">
    <subcellularLocation>
        <location evidence="1">Secreted</location>
    </subcellularLocation>
</comment>
<comment type="similarity">
    <text evidence="3">Belongs to the DEFL family.</text>
</comment>
<comment type="caution">
    <text evidence="3">Lacks 1 of the 4 disulfide bonds, which are conserved features of the family.</text>
</comment>
<reference key="1">
    <citation type="journal article" date="2000" name="Nature">
        <title>Sequence and analysis of chromosome 5 of the plant Arabidopsis thaliana.</title>
        <authorList>
            <person name="Tabata S."/>
            <person name="Kaneko T."/>
            <person name="Nakamura Y."/>
            <person name="Kotani H."/>
            <person name="Kato T."/>
            <person name="Asamizu E."/>
            <person name="Miyajima N."/>
            <person name="Sasamoto S."/>
            <person name="Kimura T."/>
            <person name="Hosouchi T."/>
            <person name="Kawashima K."/>
            <person name="Kohara M."/>
            <person name="Matsumoto M."/>
            <person name="Matsuno A."/>
            <person name="Muraki A."/>
            <person name="Nakayama S."/>
            <person name="Nakazaki N."/>
            <person name="Naruo K."/>
            <person name="Okumura S."/>
            <person name="Shinpo S."/>
            <person name="Takeuchi C."/>
            <person name="Wada T."/>
            <person name="Watanabe A."/>
            <person name="Yamada M."/>
            <person name="Yasuda M."/>
            <person name="Sato S."/>
            <person name="de la Bastide M."/>
            <person name="Huang E."/>
            <person name="Spiegel L."/>
            <person name="Gnoj L."/>
            <person name="O'Shaughnessy A."/>
            <person name="Preston R."/>
            <person name="Habermann K."/>
            <person name="Murray J."/>
            <person name="Johnson D."/>
            <person name="Rohlfing T."/>
            <person name="Nelson J."/>
            <person name="Stoneking T."/>
            <person name="Pepin K."/>
            <person name="Spieth J."/>
            <person name="Sekhon M."/>
            <person name="Armstrong J."/>
            <person name="Becker M."/>
            <person name="Belter E."/>
            <person name="Cordum H."/>
            <person name="Cordes M."/>
            <person name="Courtney L."/>
            <person name="Courtney W."/>
            <person name="Dante M."/>
            <person name="Du H."/>
            <person name="Edwards J."/>
            <person name="Fryman J."/>
            <person name="Haakensen B."/>
            <person name="Lamar E."/>
            <person name="Latreille P."/>
            <person name="Leonard S."/>
            <person name="Meyer R."/>
            <person name="Mulvaney E."/>
            <person name="Ozersky P."/>
            <person name="Riley A."/>
            <person name="Strowmatt C."/>
            <person name="Wagner-McPherson C."/>
            <person name="Wollam A."/>
            <person name="Yoakum M."/>
            <person name="Bell M."/>
            <person name="Dedhia N."/>
            <person name="Parnell L."/>
            <person name="Shah R."/>
            <person name="Rodriguez M."/>
            <person name="Hoon See L."/>
            <person name="Vil D."/>
            <person name="Baker J."/>
            <person name="Kirchoff K."/>
            <person name="Toth K."/>
            <person name="King L."/>
            <person name="Bahret A."/>
            <person name="Miller B."/>
            <person name="Marra M.A."/>
            <person name="Martienssen R."/>
            <person name="McCombie W.R."/>
            <person name="Wilson R.K."/>
            <person name="Murphy G."/>
            <person name="Bancroft I."/>
            <person name="Volckaert G."/>
            <person name="Wambutt R."/>
            <person name="Duesterhoeft A."/>
            <person name="Stiekema W."/>
            <person name="Pohl T."/>
            <person name="Entian K.-D."/>
            <person name="Terryn N."/>
            <person name="Hartley N."/>
            <person name="Bent E."/>
            <person name="Johnson S."/>
            <person name="Langham S.-A."/>
            <person name="McCullagh B."/>
            <person name="Robben J."/>
            <person name="Grymonprez B."/>
            <person name="Zimmermann W."/>
            <person name="Ramsperger U."/>
            <person name="Wedler H."/>
            <person name="Balke K."/>
            <person name="Wedler E."/>
            <person name="Peters S."/>
            <person name="van Staveren M."/>
            <person name="Dirkse W."/>
            <person name="Mooijman P."/>
            <person name="Klein Lankhorst R."/>
            <person name="Weitzenegger T."/>
            <person name="Bothe G."/>
            <person name="Rose M."/>
            <person name="Hauf J."/>
            <person name="Berneiser S."/>
            <person name="Hempel S."/>
            <person name="Feldpausch M."/>
            <person name="Lamberth S."/>
            <person name="Villarroel R."/>
            <person name="Gielen J."/>
            <person name="Ardiles W."/>
            <person name="Bents O."/>
            <person name="Lemcke K."/>
            <person name="Kolesov G."/>
            <person name="Mayer K.F.X."/>
            <person name="Rudd S."/>
            <person name="Schoof H."/>
            <person name="Schueller C."/>
            <person name="Zaccaria P."/>
            <person name="Mewes H.-W."/>
            <person name="Bevan M."/>
            <person name="Fransz P.F."/>
        </authorList>
    </citation>
    <scope>NUCLEOTIDE SEQUENCE [LARGE SCALE GENOMIC DNA]</scope>
    <source>
        <strain>cv. Columbia</strain>
    </source>
</reference>
<reference key="2">
    <citation type="journal article" date="2017" name="Plant J.">
        <title>Araport11: a complete reannotation of the Arabidopsis thaliana reference genome.</title>
        <authorList>
            <person name="Cheng C.Y."/>
            <person name="Krishnakumar V."/>
            <person name="Chan A.P."/>
            <person name="Thibaud-Nissen F."/>
            <person name="Schobel S."/>
            <person name="Town C.D."/>
        </authorList>
    </citation>
    <scope>GENOME REANNOTATION</scope>
    <source>
        <strain>cv. Columbia</strain>
    </source>
</reference>
<reference key="3">
    <citation type="journal article" date="2005" name="Plant Physiol.">
        <title>Genome organization of more than 300 defensin-like genes in Arabidopsis.</title>
        <authorList>
            <person name="Silverstein K.A.T."/>
            <person name="Graham M.A."/>
            <person name="Paape T.D."/>
            <person name="VandenBosch K.A."/>
        </authorList>
    </citation>
    <scope>GENE FAMILY</scope>
</reference>
<name>DF207_ARATH</name>
<feature type="signal peptide" evidence="2">
    <location>
        <begin position="1"/>
        <end position="29"/>
    </location>
</feature>
<feature type="chain" id="PRO_0000379699" description="Defensin-like protein 207">
    <location>
        <begin position="30"/>
        <end position="80"/>
    </location>
</feature>
<feature type="disulfide bond" evidence="1">
    <location>
        <begin position="38"/>
        <end position="64"/>
    </location>
</feature>
<feature type="disulfide bond" evidence="1">
    <location>
        <begin position="50"/>
        <end position="75"/>
    </location>
</feature>
<feature type="disulfide bond" evidence="1">
    <location>
        <begin position="54"/>
        <end position="77"/>
    </location>
</feature>
<organism>
    <name type="scientific">Arabidopsis thaliana</name>
    <name type="common">Mouse-ear cress</name>
    <dbReference type="NCBI Taxonomy" id="3702"/>
    <lineage>
        <taxon>Eukaryota</taxon>
        <taxon>Viridiplantae</taxon>
        <taxon>Streptophyta</taxon>
        <taxon>Embryophyta</taxon>
        <taxon>Tracheophyta</taxon>
        <taxon>Spermatophyta</taxon>
        <taxon>Magnoliopsida</taxon>
        <taxon>eudicotyledons</taxon>
        <taxon>Gunneridae</taxon>
        <taxon>Pentapetalae</taxon>
        <taxon>rosids</taxon>
        <taxon>malvids</taxon>
        <taxon>Brassicales</taxon>
        <taxon>Brassicaceae</taxon>
        <taxon>Camelineae</taxon>
        <taxon>Arabidopsis</taxon>
    </lineage>
</organism>
<keyword id="KW-0929">Antimicrobial</keyword>
<keyword id="KW-1015">Disulfide bond</keyword>
<keyword id="KW-0295">Fungicide</keyword>
<keyword id="KW-0611">Plant defense</keyword>
<keyword id="KW-1185">Reference proteome</keyword>
<keyword id="KW-0964">Secreted</keyword>
<keyword id="KW-0732">Signal</keyword>
<dbReference type="EMBL" id="AC051625">
    <property type="status" value="NOT_ANNOTATED_CDS"/>
    <property type="molecule type" value="Genomic_DNA"/>
</dbReference>
<dbReference type="EMBL" id="CP002688">
    <property type="protein sequence ID" value="AED93897.1"/>
    <property type="molecule type" value="Genomic_DNA"/>
</dbReference>
<dbReference type="RefSeq" id="NP_680294.1">
    <property type="nucleotide sequence ID" value="NM_147989.3"/>
</dbReference>
<dbReference type="SMR" id="Q3E8R5"/>
<dbReference type="STRING" id="3702.Q3E8R5"/>
<dbReference type="PaxDb" id="3702-AT5G33355.1"/>
<dbReference type="EnsemblPlants" id="AT5G33355.1">
    <property type="protein sequence ID" value="AT5G33355.1"/>
    <property type="gene ID" value="AT5G33355"/>
</dbReference>
<dbReference type="GeneID" id="833312"/>
<dbReference type="Gramene" id="AT5G33355.1">
    <property type="protein sequence ID" value="AT5G33355.1"/>
    <property type="gene ID" value="AT5G33355"/>
</dbReference>
<dbReference type="KEGG" id="ath:AT5G33355"/>
<dbReference type="Araport" id="AT5G33355"/>
<dbReference type="TAIR" id="AT5G33355"/>
<dbReference type="eggNOG" id="KOG1075">
    <property type="taxonomic scope" value="Eukaryota"/>
</dbReference>
<dbReference type="HOGENOM" id="CLU_152804_0_0_1"/>
<dbReference type="InParanoid" id="Q3E8R5"/>
<dbReference type="OMA" id="CKACCEV"/>
<dbReference type="OrthoDB" id="1052466at2759"/>
<dbReference type="PhylomeDB" id="Q3E8R5"/>
<dbReference type="PRO" id="PR:Q3E8R5"/>
<dbReference type="Proteomes" id="UP000006548">
    <property type="component" value="Chromosome 5"/>
</dbReference>
<dbReference type="ExpressionAtlas" id="Q3E8R5">
    <property type="expression patterns" value="baseline and differential"/>
</dbReference>
<dbReference type="GO" id="GO:0005576">
    <property type="term" value="C:extracellular region"/>
    <property type="evidence" value="ECO:0007669"/>
    <property type="project" value="UniProtKB-SubCell"/>
</dbReference>
<dbReference type="GO" id="GO:0050832">
    <property type="term" value="P:defense response to fungus"/>
    <property type="evidence" value="ECO:0007669"/>
    <property type="project" value="UniProtKB-KW"/>
</dbReference>
<dbReference type="GO" id="GO:0031640">
    <property type="term" value="P:killing of cells of another organism"/>
    <property type="evidence" value="ECO:0007669"/>
    <property type="project" value="UniProtKB-KW"/>
</dbReference>